<proteinExistence type="inferred from homology"/>
<comment type="function">
    <text evidence="1">ATP-dependent carboxylate-amine ligase which exhibits weak glutamate--cysteine ligase activity.</text>
</comment>
<comment type="catalytic activity">
    <reaction evidence="1">
        <text>L-cysteine + L-glutamate + ATP = gamma-L-glutamyl-L-cysteine + ADP + phosphate + H(+)</text>
        <dbReference type="Rhea" id="RHEA:13285"/>
        <dbReference type="ChEBI" id="CHEBI:15378"/>
        <dbReference type="ChEBI" id="CHEBI:29985"/>
        <dbReference type="ChEBI" id="CHEBI:30616"/>
        <dbReference type="ChEBI" id="CHEBI:35235"/>
        <dbReference type="ChEBI" id="CHEBI:43474"/>
        <dbReference type="ChEBI" id="CHEBI:58173"/>
        <dbReference type="ChEBI" id="CHEBI:456216"/>
        <dbReference type="EC" id="6.3.2.2"/>
    </reaction>
</comment>
<comment type="subunit">
    <text evidence="1">Homodimer.</text>
</comment>
<comment type="similarity">
    <text evidence="1">Belongs to the glutamate--cysteine ligase type 2 family. YbdK subfamily.</text>
</comment>
<reference key="1">
    <citation type="journal article" date="2005" name="Nucleic Acids Res.">
        <title>Genome dynamics and diversity of Shigella species, the etiologic agents of bacillary dysentery.</title>
        <authorList>
            <person name="Yang F."/>
            <person name="Yang J."/>
            <person name="Zhang X."/>
            <person name="Chen L."/>
            <person name="Jiang Y."/>
            <person name="Yan Y."/>
            <person name="Tang X."/>
            <person name="Wang J."/>
            <person name="Xiong Z."/>
            <person name="Dong J."/>
            <person name="Xue Y."/>
            <person name="Zhu Y."/>
            <person name="Xu X."/>
            <person name="Sun L."/>
            <person name="Chen S."/>
            <person name="Nie H."/>
            <person name="Peng J."/>
            <person name="Xu J."/>
            <person name="Wang Y."/>
            <person name="Yuan Z."/>
            <person name="Wen Y."/>
            <person name="Yao Z."/>
            <person name="Shen Y."/>
            <person name="Qiang B."/>
            <person name="Hou Y."/>
            <person name="Yu J."/>
            <person name="Jin Q."/>
        </authorList>
    </citation>
    <scope>NUCLEOTIDE SEQUENCE [LARGE SCALE GENOMIC DNA]</scope>
    <source>
        <strain>Sb227</strain>
    </source>
</reference>
<dbReference type="EC" id="6.3.2.2" evidence="1"/>
<dbReference type="EMBL" id="CP000036">
    <property type="protein sequence ID" value="ABB65146.1"/>
    <property type="molecule type" value="Genomic_DNA"/>
</dbReference>
<dbReference type="RefSeq" id="WP_001130610.1">
    <property type="nucleotide sequence ID" value="NC_007613.1"/>
</dbReference>
<dbReference type="SMR" id="Q324W2"/>
<dbReference type="KEGG" id="sbo:SBO_0442"/>
<dbReference type="HOGENOM" id="CLU_044848_1_1_6"/>
<dbReference type="Proteomes" id="UP000007067">
    <property type="component" value="Chromosome"/>
</dbReference>
<dbReference type="GO" id="GO:0005524">
    <property type="term" value="F:ATP binding"/>
    <property type="evidence" value="ECO:0007669"/>
    <property type="project" value="UniProtKB-KW"/>
</dbReference>
<dbReference type="GO" id="GO:0004357">
    <property type="term" value="F:glutamate-cysteine ligase activity"/>
    <property type="evidence" value="ECO:0007669"/>
    <property type="project" value="UniProtKB-EC"/>
</dbReference>
<dbReference type="GO" id="GO:0042398">
    <property type="term" value="P:modified amino acid biosynthetic process"/>
    <property type="evidence" value="ECO:0007669"/>
    <property type="project" value="InterPro"/>
</dbReference>
<dbReference type="FunFam" id="3.30.590.20:FF:000002">
    <property type="entry name" value="Putative glutamate--cysteine ligase 2"/>
    <property type="match status" value="1"/>
</dbReference>
<dbReference type="Gene3D" id="3.30.590.20">
    <property type="match status" value="1"/>
</dbReference>
<dbReference type="HAMAP" id="MF_01609">
    <property type="entry name" value="Glu_cys_ligase_2"/>
    <property type="match status" value="1"/>
</dbReference>
<dbReference type="InterPro" id="IPR050141">
    <property type="entry name" value="GCL_type2/YbdK_subfam"/>
</dbReference>
<dbReference type="InterPro" id="IPR006336">
    <property type="entry name" value="GCS2"/>
</dbReference>
<dbReference type="InterPro" id="IPR014746">
    <property type="entry name" value="Gln_synth/guanido_kin_cat_dom"/>
</dbReference>
<dbReference type="InterPro" id="IPR011793">
    <property type="entry name" value="YbdK"/>
</dbReference>
<dbReference type="NCBIfam" id="TIGR02050">
    <property type="entry name" value="gshA_cyan_rel"/>
    <property type="match status" value="1"/>
</dbReference>
<dbReference type="NCBIfam" id="NF010040">
    <property type="entry name" value="PRK13516.1"/>
    <property type="match status" value="1"/>
</dbReference>
<dbReference type="PANTHER" id="PTHR36510">
    <property type="entry name" value="GLUTAMATE--CYSTEINE LIGASE 2-RELATED"/>
    <property type="match status" value="1"/>
</dbReference>
<dbReference type="PANTHER" id="PTHR36510:SF1">
    <property type="entry name" value="GLUTAMATE--CYSTEINE LIGASE 2-RELATED"/>
    <property type="match status" value="1"/>
</dbReference>
<dbReference type="Pfam" id="PF04107">
    <property type="entry name" value="GCS2"/>
    <property type="match status" value="1"/>
</dbReference>
<dbReference type="SUPFAM" id="SSF55931">
    <property type="entry name" value="Glutamine synthetase/guanido kinase"/>
    <property type="match status" value="1"/>
</dbReference>
<name>GCS2_SHIBS</name>
<gene>
    <name type="primary">ybdK</name>
    <name type="ordered locus">SBO_0442</name>
</gene>
<protein>
    <recommendedName>
        <fullName evidence="1">Putative glutamate--cysteine ligase 2</fullName>
        <ecNumber evidence="1">6.3.2.2</ecNumber>
    </recommendedName>
    <alternativeName>
        <fullName evidence="1">Gamma-glutamylcysteine synthetase 2</fullName>
        <shortName evidence="1">GCS 2</shortName>
        <shortName evidence="1">Gamma-GCS 2</shortName>
    </alternativeName>
</protein>
<accession>Q324W2</accession>
<keyword id="KW-0067">ATP-binding</keyword>
<keyword id="KW-0436">Ligase</keyword>
<keyword id="KW-0547">Nucleotide-binding</keyword>
<organism>
    <name type="scientific">Shigella boydii serotype 4 (strain Sb227)</name>
    <dbReference type="NCBI Taxonomy" id="300268"/>
    <lineage>
        <taxon>Bacteria</taxon>
        <taxon>Pseudomonadati</taxon>
        <taxon>Pseudomonadota</taxon>
        <taxon>Gammaproteobacteria</taxon>
        <taxon>Enterobacterales</taxon>
        <taxon>Enterobacteriaceae</taxon>
        <taxon>Shigella</taxon>
    </lineage>
</organism>
<feature type="chain" id="PRO_0000255814" description="Putative glutamate--cysteine ligase 2">
    <location>
        <begin position="1"/>
        <end position="372"/>
    </location>
</feature>
<evidence type="ECO:0000255" key="1">
    <source>
        <dbReference type="HAMAP-Rule" id="MF_01609"/>
    </source>
</evidence>
<sequence>MPLPDFHVSEPFTLGIELEMLVVNPPGYDLSQDSSILIDAVKNKITAGEVKHDITESMLELATDVCRDINQAAGQFSAMQKVVLQAAADHHLEICGGGTHPFQKWQRQEVCDNERYQRTLENFGYLIQQVTVFGQHVHVGCASGDDAIYLLHGLSRFVPHFIALSAASPYMQGTDTRFASSRPNIFSAFPDNGPMPWVSNWQQFEALFRCLSYTTMIDSIKDLHWDIRPSPHFGTVEVRVMDTPLTLSHAVNMAGLIQATAHWLLTERPFKHQEKDYLLYKFNRFQACRYGLEGVITDPHTGDRRPLTEDTLRLLEKIAPSAHKIGASSAIEALHRQVVSGLNEAQLMRDFVADGGSLIGLVKKHCEIWAGD</sequence>